<proteinExistence type="inferred from homology"/>
<accession>Q2SKR7</accession>
<gene>
    <name evidence="1" type="primary">syd</name>
    <name type="ordered locus">HCH_01923</name>
</gene>
<protein>
    <recommendedName>
        <fullName evidence="1">Protein Syd</fullName>
    </recommendedName>
</protein>
<sequence>MGQHEVTARLSELTNTFIERHHSSSRQRPCIPLNEDTRYMLDSPCVEHVDEEAGVFYWTPRPHMDFTLFDGLEQGLEVAIHPSITAFYGSYWSDGLWCSSPFGEISLIQLWNEDDMETLRENLLGHAFQKSKRRQGLTFFIGLTADDRIVTVDNHSGEVYLEEAGRPPQRTLAASLGELLRELEPTLTPYTG</sequence>
<organism>
    <name type="scientific">Hahella chejuensis (strain KCTC 2396)</name>
    <dbReference type="NCBI Taxonomy" id="349521"/>
    <lineage>
        <taxon>Bacteria</taxon>
        <taxon>Pseudomonadati</taxon>
        <taxon>Pseudomonadota</taxon>
        <taxon>Gammaproteobacteria</taxon>
        <taxon>Oceanospirillales</taxon>
        <taxon>Hahellaceae</taxon>
        <taxon>Hahella</taxon>
    </lineage>
</organism>
<name>SYDP_HAHCH</name>
<comment type="function">
    <text evidence="1">Interacts with the SecY protein in vivo. May bind preferentially to an uncomplexed state of SecY, thus functioning either as a chelating agent for excess SecY in the cell or as a regulatory factor that negatively controls the translocase function.</text>
</comment>
<comment type="subcellular location">
    <subcellularLocation>
        <location evidence="1">Cell inner membrane</location>
        <topology evidence="1">Peripheral membrane protein</topology>
        <orientation evidence="1">Cytoplasmic side</orientation>
    </subcellularLocation>
    <text evidence="1">Loosely associated with the cytoplasmic side of the inner membrane, probably via SecY.</text>
</comment>
<comment type="similarity">
    <text evidence="1">Belongs to the Syd family.</text>
</comment>
<feature type="chain" id="PRO_0000298251" description="Protein Syd">
    <location>
        <begin position="1"/>
        <end position="192"/>
    </location>
</feature>
<reference key="1">
    <citation type="journal article" date="2005" name="Nucleic Acids Res.">
        <title>Genomic blueprint of Hahella chejuensis, a marine microbe producing an algicidal agent.</title>
        <authorList>
            <person name="Jeong H."/>
            <person name="Yim J.H."/>
            <person name="Lee C."/>
            <person name="Choi S.-H."/>
            <person name="Park Y.K."/>
            <person name="Yoon S.H."/>
            <person name="Hur C.-G."/>
            <person name="Kang H.-Y."/>
            <person name="Kim D."/>
            <person name="Lee H.H."/>
            <person name="Park K.H."/>
            <person name="Park S.-H."/>
            <person name="Park H.-S."/>
            <person name="Lee H.K."/>
            <person name="Oh T.K."/>
            <person name="Kim J.F."/>
        </authorList>
    </citation>
    <scope>NUCLEOTIDE SEQUENCE [LARGE SCALE GENOMIC DNA]</scope>
    <source>
        <strain>KCTC 2396</strain>
    </source>
</reference>
<dbReference type="EMBL" id="CP000155">
    <property type="protein sequence ID" value="ABC28757.1"/>
    <property type="molecule type" value="Genomic_DNA"/>
</dbReference>
<dbReference type="RefSeq" id="WP_011395828.1">
    <property type="nucleotide sequence ID" value="NC_007645.1"/>
</dbReference>
<dbReference type="SMR" id="Q2SKR7"/>
<dbReference type="STRING" id="349521.HCH_01923"/>
<dbReference type="KEGG" id="hch:HCH_01923"/>
<dbReference type="eggNOG" id="ENOG502ZCMR">
    <property type="taxonomic scope" value="Bacteria"/>
</dbReference>
<dbReference type="HOGENOM" id="CLU_121866_0_0_6"/>
<dbReference type="OrthoDB" id="5599437at2"/>
<dbReference type="Proteomes" id="UP000000238">
    <property type="component" value="Chromosome"/>
</dbReference>
<dbReference type="GO" id="GO:0009898">
    <property type="term" value="C:cytoplasmic side of plasma membrane"/>
    <property type="evidence" value="ECO:0007669"/>
    <property type="project" value="InterPro"/>
</dbReference>
<dbReference type="CDD" id="cd16323">
    <property type="entry name" value="Syd"/>
    <property type="match status" value="1"/>
</dbReference>
<dbReference type="Gene3D" id="3.40.1580.20">
    <property type="entry name" value="Syd protein"/>
    <property type="match status" value="1"/>
</dbReference>
<dbReference type="HAMAP" id="MF_01104">
    <property type="entry name" value="Syd"/>
    <property type="match status" value="1"/>
</dbReference>
<dbReference type="InterPro" id="IPR009948">
    <property type="entry name" value="Syd"/>
</dbReference>
<dbReference type="InterPro" id="IPR038228">
    <property type="entry name" value="Syd_sf"/>
</dbReference>
<dbReference type="NCBIfam" id="NF003439">
    <property type="entry name" value="PRK04968.1"/>
    <property type="match status" value="1"/>
</dbReference>
<dbReference type="Pfam" id="PF07348">
    <property type="entry name" value="Syd"/>
    <property type="match status" value="1"/>
</dbReference>
<evidence type="ECO:0000255" key="1">
    <source>
        <dbReference type="HAMAP-Rule" id="MF_01104"/>
    </source>
</evidence>
<keyword id="KW-0997">Cell inner membrane</keyword>
<keyword id="KW-1003">Cell membrane</keyword>
<keyword id="KW-0472">Membrane</keyword>
<keyword id="KW-1185">Reference proteome</keyword>